<name>YCCT_SALDC</name>
<protein>
    <recommendedName>
        <fullName evidence="1">UPF0319 protein YccT</fullName>
    </recommendedName>
</protein>
<comment type="similarity">
    <text evidence="1">Belongs to the UPF0319 family.</text>
</comment>
<accession>B5FR07</accession>
<dbReference type="EMBL" id="CP001144">
    <property type="protein sequence ID" value="ACH74471.1"/>
    <property type="molecule type" value="Genomic_DNA"/>
</dbReference>
<dbReference type="RefSeq" id="WP_000847736.1">
    <property type="nucleotide sequence ID" value="NC_011205.1"/>
</dbReference>
<dbReference type="KEGG" id="sed:SeD_A1152"/>
<dbReference type="HOGENOM" id="CLU_073782_2_0_6"/>
<dbReference type="Proteomes" id="UP000008322">
    <property type="component" value="Chromosome"/>
</dbReference>
<dbReference type="HAMAP" id="MF_00789">
    <property type="entry name" value="UPF0319"/>
    <property type="match status" value="1"/>
</dbReference>
<dbReference type="InterPro" id="IPR018635">
    <property type="entry name" value="UPF0319"/>
</dbReference>
<dbReference type="NCBIfam" id="NF047712">
    <property type="entry name" value="CrliSynInhib"/>
    <property type="match status" value="1"/>
</dbReference>
<dbReference type="NCBIfam" id="NF002967">
    <property type="entry name" value="PRK03641.1"/>
    <property type="match status" value="1"/>
</dbReference>
<dbReference type="PANTHER" id="PTHR38108">
    <property type="entry name" value="UPF0319 PROTEIN YCCT"/>
    <property type="match status" value="1"/>
</dbReference>
<dbReference type="PANTHER" id="PTHR38108:SF1">
    <property type="entry name" value="UPF0319 PROTEIN YCCT"/>
    <property type="match status" value="1"/>
</dbReference>
<dbReference type="Pfam" id="PF09829">
    <property type="entry name" value="DUF2057"/>
    <property type="match status" value="1"/>
</dbReference>
<evidence type="ECO:0000255" key="1">
    <source>
        <dbReference type="HAMAP-Rule" id="MF_00789"/>
    </source>
</evidence>
<reference key="1">
    <citation type="journal article" date="2011" name="J. Bacteriol.">
        <title>Comparative genomics of 28 Salmonella enterica isolates: evidence for CRISPR-mediated adaptive sublineage evolution.</title>
        <authorList>
            <person name="Fricke W.F."/>
            <person name="Mammel M.K."/>
            <person name="McDermott P.F."/>
            <person name="Tartera C."/>
            <person name="White D.G."/>
            <person name="Leclerc J.E."/>
            <person name="Ravel J."/>
            <person name="Cebula T.A."/>
        </authorList>
    </citation>
    <scope>NUCLEOTIDE SEQUENCE [LARGE SCALE GENOMIC DNA]</scope>
    <source>
        <strain>CT_02021853</strain>
    </source>
</reference>
<feature type="signal peptide" evidence="1">
    <location>
        <begin position="1"/>
        <end position="20"/>
    </location>
</feature>
<feature type="chain" id="PRO_1000200493" description="UPF0319 protein YccT">
    <location>
        <begin position="21"/>
        <end position="220"/>
    </location>
</feature>
<proteinExistence type="inferred from homology"/>
<gene>
    <name evidence="1" type="primary">yccT</name>
    <name type="ordered locus">SeD_A1152</name>
</gene>
<keyword id="KW-0732">Signal</keyword>
<organism>
    <name type="scientific">Salmonella dublin (strain CT_02021853)</name>
    <dbReference type="NCBI Taxonomy" id="439851"/>
    <lineage>
        <taxon>Bacteria</taxon>
        <taxon>Pseudomonadati</taxon>
        <taxon>Pseudomonadota</taxon>
        <taxon>Gammaproteobacteria</taxon>
        <taxon>Enterobacterales</taxon>
        <taxon>Enterobacteriaceae</taxon>
        <taxon>Salmonella</taxon>
    </lineage>
</organism>
<sequence>MKTGALTTFLALCLPVTVFATTLRLSNEVDLLVLDGKKVSSSLLRGAESIELENGPHQLVFRVEKTIRLSGNEERLYISPPLVISFDTQLISQVNFQLPRLENEREASHFNAAPRLALLDGDAMPIPVKLDILAITSTAKVVDYEIETERYNKSAKRASLPQFATMMADDSTLLSDVSELDTVPPQSQTLTEQRLKYWFRLADPQTRHHFLQWAEKQPPS</sequence>